<comment type="function">
    <text evidence="1">Catalyzes the isomerization between 2-isopropylmalate and 3-isopropylmalate, via the formation of 2-isopropylmaleate.</text>
</comment>
<comment type="catalytic activity">
    <reaction evidence="1">
        <text>(2R,3S)-3-isopropylmalate = (2S)-2-isopropylmalate</text>
        <dbReference type="Rhea" id="RHEA:32287"/>
        <dbReference type="ChEBI" id="CHEBI:1178"/>
        <dbReference type="ChEBI" id="CHEBI:35121"/>
        <dbReference type="EC" id="4.2.1.33"/>
    </reaction>
</comment>
<comment type="cofactor">
    <cofactor evidence="1">
        <name>[4Fe-4S] cluster</name>
        <dbReference type="ChEBI" id="CHEBI:49883"/>
    </cofactor>
    <text evidence="1">Binds 1 [4Fe-4S] cluster per subunit.</text>
</comment>
<comment type="pathway">
    <text evidence="1">Amino-acid biosynthesis; L-leucine biosynthesis; L-leucine from 3-methyl-2-oxobutanoate: step 2/4.</text>
</comment>
<comment type="subunit">
    <text evidence="1">Heterodimer of LeuC and LeuD.</text>
</comment>
<comment type="similarity">
    <text evidence="1">Belongs to the aconitase/IPM isomerase family. LeuC type 2 subfamily.</text>
</comment>
<feature type="chain" id="PRO_1000135731" description="3-isopropylmalate dehydratase large subunit">
    <location>
        <begin position="1"/>
        <end position="418"/>
    </location>
</feature>
<feature type="binding site" evidence="1">
    <location>
        <position position="297"/>
    </location>
    <ligand>
        <name>[4Fe-4S] cluster</name>
        <dbReference type="ChEBI" id="CHEBI:49883"/>
    </ligand>
</feature>
<feature type="binding site" evidence="1">
    <location>
        <position position="357"/>
    </location>
    <ligand>
        <name>[4Fe-4S] cluster</name>
        <dbReference type="ChEBI" id="CHEBI:49883"/>
    </ligand>
</feature>
<feature type="binding site" evidence="1">
    <location>
        <position position="360"/>
    </location>
    <ligand>
        <name>[4Fe-4S] cluster</name>
        <dbReference type="ChEBI" id="CHEBI:49883"/>
    </ligand>
</feature>
<accession>B2KBD7</accession>
<name>LEUC_ELUMP</name>
<dbReference type="EC" id="4.2.1.33" evidence="1"/>
<dbReference type="EMBL" id="CP001055">
    <property type="protein sequence ID" value="ACC97959.1"/>
    <property type="molecule type" value="Genomic_DNA"/>
</dbReference>
<dbReference type="RefSeq" id="WP_012414574.1">
    <property type="nucleotide sequence ID" value="NC_010644.1"/>
</dbReference>
<dbReference type="SMR" id="B2KBD7"/>
<dbReference type="STRING" id="445932.Emin_0402"/>
<dbReference type="KEGG" id="emi:Emin_0402"/>
<dbReference type="HOGENOM" id="CLU_006714_3_4_0"/>
<dbReference type="OrthoDB" id="9764318at2"/>
<dbReference type="UniPathway" id="UPA00048">
    <property type="reaction ID" value="UER00071"/>
</dbReference>
<dbReference type="Proteomes" id="UP000001029">
    <property type="component" value="Chromosome"/>
</dbReference>
<dbReference type="GO" id="GO:0003861">
    <property type="term" value="F:3-isopropylmalate dehydratase activity"/>
    <property type="evidence" value="ECO:0007669"/>
    <property type="project" value="UniProtKB-UniRule"/>
</dbReference>
<dbReference type="GO" id="GO:0051539">
    <property type="term" value="F:4 iron, 4 sulfur cluster binding"/>
    <property type="evidence" value="ECO:0007669"/>
    <property type="project" value="UniProtKB-KW"/>
</dbReference>
<dbReference type="GO" id="GO:0046872">
    <property type="term" value="F:metal ion binding"/>
    <property type="evidence" value="ECO:0007669"/>
    <property type="project" value="UniProtKB-KW"/>
</dbReference>
<dbReference type="GO" id="GO:0009098">
    <property type="term" value="P:L-leucine biosynthetic process"/>
    <property type="evidence" value="ECO:0007669"/>
    <property type="project" value="UniProtKB-UniRule"/>
</dbReference>
<dbReference type="CDD" id="cd01583">
    <property type="entry name" value="IPMI"/>
    <property type="match status" value="1"/>
</dbReference>
<dbReference type="Gene3D" id="3.30.499.10">
    <property type="entry name" value="Aconitase, domain 3"/>
    <property type="match status" value="2"/>
</dbReference>
<dbReference type="HAMAP" id="MF_01027">
    <property type="entry name" value="LeuC_type2"/>
    <property type="match status" value="1"/>
</dbReference>
<dbReference type="InterPro" id="IPR015931">
    <property type="entry name" value="Acnase/IPM_dHydase_lsu_aba_1/3"/>
</dbReference>
<dbReference type="InterPro" id="IPR001030">
    <property type="entry name" value="Acoase/IPM_deHydtase_lsu_aba"/>
</dbReference>
<dbReference type="InterPro" id="IPR018136">
    <property type="entry name" value="Aconitase_4Fe-4S_BS"/>
</dbReference>
<dbReference type="InterPro" id="IPR036008">
    <property type="entry name" value="Aconitase_4Fe-4S_dom"/>
</dbReference>
<dbReference type="InterPro" id="IPR011826">
    <property type="entry name" value="HAcnase/IPMdehydase_lsu_prok"/>
</dbReference>
<dbReference type="InterPro" id="IPR006251">
    <property type="entry name" value="Homoacnase/IPMdehydase_lsu"/>
</dbReference>
<dbReference type="InterPro" id="IPR050067">
    <property type="entry name" value="IPM_dehydratase_rel_enz"/>
</dbReference>
<dbReference type="InterPro" id="IPR033941">
    <property type="entry name" value="IPMI_cat"/>
</dbReference>
<dbReference type="NCBIfam" id="TIGR01343">
    <property type="entry name" value="hacA_fam"/>
    <property type="match status" value="1"/>
</dbReference>
<dbReference type="NCBIfam" id="TIGR02086">
    <property type="entry name" value="IPMI_arch"/>
    <property type="match status" value="1"/>
</dbReference>
<dbReference type="NCBIfam" id="NF001614">
    <property type="entry name" value="PRK00402.1"/>
    <property type="match status" value="1"/>
</dbReference>
<dbReference type="PANTHER" id="PTHR43822:SF2">
    <property type="entry name" value="HOMOACONITASE, MITOCHONDRIAL"/>
    <property type="match status" value="1"/>
</dbReference>
<dbReference type="PANTHER" id="PTHR43822">
    <property type="entry name" value="HOMOACONITASE, MITOCHONDRIAL-RELATED"/>
    <property type="match status" value="1"/>
</dbReference>
<dbReference type="Pfam" id="PF00330">
    <property type="entry name" value="Aconitase"/>
    <property type="match status" value="1"/>
</dbReference>
<dbReference type="PRINTS" id="PR00415">
    <property type="entry name" value="ACONITASE"/>
</dbReference>
<dbReference type="SUPFAM" id="SSF53732">
    <property type="entry name" value="Aconitase iron-sulfur domain"/>
    <property type="match status" value="1"/>
</dbReference>
<dbReference type="PROSITE" id="PS00450">
    <property type="entry name" value="ACONITASE_1"/>
    <property type="match status" value="1"/>
</dbReference>
<dbReference type="PROSITE" id="PS01244">
    <property type="entry name" value="ACONITASE_2"/>
    <property type="match status" value="1"/>
</dbReference>
<organism>
    <name type="scientific">Elusimicrobium minutum (strain Pei191)</name>
    <dbReference type="NCBI Taxonomy" id="445932"/>
    <lineage>
        <taxon>Bacteria</taxon>
        <taxon>Pseudomonadati</taxon>
        <taxon>Elusimicrobiota</taxon>
        <taxon>Elusimicrobia</taxon>
        <taxon>Elusimicrobiales</taxon>
        <taxon>Elusimicrobiaceae</taxon>
        <taxon>Elusimicrobium</taxon>
    </lineage>
</organism>
<protein>
    <recommendedName>
        <fullName evidence="1">3-isopropylmalate dehydratase large subunit</fullName>
        <ecNumber evidence="1">4.2.1.33</ecNumber>
    </recommendedName>
    <alternativeName>
        <fullName evidence="1">Alpha-IPM isomerase</fullName>
        <shortName evidence="1">IPMI</shortName>
    </alternativeName>
    <alternativeName>
        <fullName evidence="1">Isopropylmalate isomerase</fullName>
    </alternativeName>
</protein>
<reference key="1">
    <citation type="journal article" date="2009" name="Appl. Environ. Microbiol.">
        <title>Genomic analysis of 'Elusimicrobium minutum,' the first cultivated representative of the phylum 'Elusimicrobia' (formerly termite group 1).</title>
        <authorList>
            <person name="Herlemann D.P.R."/>
            <person name="Geissinger O."/>
            <person name="Ikeda-Ohtsubo W."/>
            <person name="Kunin V."/>
            <person name="Sun H."/>
            <person name="Lapidus A."/>
            <person name="Hugenholtz P."/>
            <person name="Brune A."/>
        </authorList>
    </citation>
    <scope>NUCLEOTIDE SEQUENCE [LARGE SCALE GENOMIC DNA]</scope>
    <source>
        <strain>Pei191</strain>
    </source>
</reference>
<sequence>MPQTIAEKIISNHSGRRVKAGEFVIADVDLTAVQDGTGPLTVEELKKAGFTKLANPARTILFIDHAAPSPRKELSNSQVVLRNFAKETGAILSEIGEGVCHQLLAEKYVNPGEILIGADSHTCTGGALGAFATGMGSTDVAVGMALGKTWLKAPQTFKIEVEGAFKKGVGAKDLILHLIGVIGADGATYKALEFHGSTIRNMEMADRFTLANMAVEAGAKAGLFFTDEKTRAYLAERGRGDNFKLISADEGADYEKVIKIDASSLEPTVSCPHTVDNTKTVGELKDIKVNQVFIGTCTNGRIEDLRIAAEILKDKKVNPGTRTFITPASRDVMLAALKEGLIEIFVKAGASVQTPGCGPCVGVHGGILGDGEVCLATQNRNFQGRMGNTKGFIYLSSPAVAAYSALKGYISDPREILK</sequence>
<proteinExistence type="inferred from homology"/>
<gene>
    <name evidence="1" type="primary">leuC</name>
    <name type="ordered locus">Emin_0402</name>
</gene>
<keyword id="KW-0004">4Fe-4S</keyword>
<keyword id="KW-0028">Amino-acid biosynthesis</keyword>
<keyword id="KW-0100">Branched-chain amino acid biosynthesis</keyword>
<keyword id="KW-0408">Iron</keyword>
<keyword id="KW-0411">Iron-sulfur</keyword>
<keyword id="KW-0432">Leucine biosynthesis</keyword>
<keyword id="KW-0456">Lyase</keyword>
<keyword id="KW-0479">Metal-binding</keyword>
<keyword id="KW-1185">Reference proteome</keyword>
<evidence type="ECO:0000255" key="1">
    <source>
        <dbReference type="HAMAP-Rule" id="MF_01027"/>
    </source>
</evidence>